<comment type="subcellular location">
    <subcellularLocation>
        <location evidence="2">Membrane</location>
        <topology evidence="2">Multi-pass membrane protein</topology>
    </subcellularLocation>
</comment>
<comment type="similarity">
    <text evidence="2">Belongs to the clarin family.</text>
</comment>
<proteinExistence type="evidence at protein level"/>
<feature type="chain" id="PRO_0000274699" description="Clarin-3">
    <location>
        <begin position="1"/>
        <end position="226"/>
    </location>
</feature>
<feature type="transmembrane region" description="Helical" evidence="1">
    <location>
        <begin position="8"/>
        <end position="28"/>
    </location>
</feature>
<feature type="transmembrane region" description="Helical" evidence="1">
    <location>
        <begin position="92"/>
        <end position="112"/>
    </location>
</feature>
<feature type="transmembrane region" description="Helical" evidence="1">
    <location>
        <begin position="128"/>
        <end position="148"/>
    </location>
</feature>
<feature type="transmembrane region" description="Helical" evidence="1">
    <location>
        <begin position="181"/>
        <end position="201"/>
    </location>
</feature>
<feature type="glycosylation site" description="N-linked (GlcNAc...) asparagine" evidence="1">
    <location>
        <position position="46"/>
    </location>
</feature>
<evidence type="ECO:0000255" key="1"/>
<evidence type="ECO:0000305" key="2"/>
<reference key="1">
    <citation type="journal article" date="2005" name="Science">
        <title>The transcriptional landscape of the mammalian genome.</title>
        <authorList>
            <person name="Carninci P."/>
            <person name="Kasukawa T."/>
            <person name="Katayama S."/>
            <person name="Gough J."/>
            <person name="Frith M.C."/>
            <person name="Maeda N."/>
            <person name="Oyama R."/>
            <person name="Ravasi T."/>
            <person name="Lenhard B."/>
            <person name="Wells C."/>
            <person name="Kodzius R."/>
            <person name="Shimokawa K."/>
            <person name="Bajic V.B."/>
            <person name="Brenner S.E."/>
            <person name="Batalov S."/>
            <person name="Forrest A.R."/>
            <person name="Zavolan M."/>
            <person name="Davis M.J."/>
            <person name="Wilming L.G."/>
            <person name="Aidinis V."/>
            <person name="Allen J.E."/>
            <person name="Ambesi-Impiombato A."/>
            <person name="Apweiler R."/>
            <person name="Aturaliya R.N."/>
            <person name="Bailey T.L."/>
            <person name="Bansal M."/>
            <person name="Baxter L."/>
            <person name="Beisel K.W."/>
            <person name="Bersano T."/>
            <person name="Bono H."/>
            <person name="Chalk A.M."/>
            <person name="Chiu K.P."/>
            <person name="Choudhary V."/>
            <person name="Christoffels A."/>
            <person name="Clutterbuck D.R."/>
            <person name="Crowe M.L."/>
            <person name="Dalla E."/>
            <person name="Dalrymple B.P."/>
            <person name="de Bono B."/>
            <person name="Della Gatta G."/>
            <person name="di Bernardo D."/>
            <person name="Down T."/>
            <person name="Engstrom P."/>
            <person name="Fagiolini M."/>
            <person name="Faulkner G."/>
            <person name="Fletcher C.F."/>
            <person name="Fukushima T."/>
            <person name="Furuno M."/>
            <person name="Futaki S."/>
            <person name="Gariboldi M."/>
            <person name="Georgii-Hemming P."/>
            <person name="Gingeras T.R."/>
            <person name="Gojobori T."/>
            <person name="Green R.E."/>
            <person name="Gustincich S."/>
            <person name="Harbers M."/>
            <person name="Hayashi Y."/>
            <person name="Hensch T.K."/>
            <person name="Hirokawa N."/>
            <person name="Hill D."/>
            <person name="Huminiecki L."/>
            <person name="Iacono M."/>
            <person name="Ikeo K."/>
            <person name="Iwama A."/>
            <person name="Ishikawa T."/>
            <person name="Jakt M."/>
            <person name="Kanapin A."/>
            <person name="Katoh M."/>
            <person name="Kawasawa Y."/>
            <person name="Kelso J."/>
            <person name="Kitamura H."/>
            <person name="Kitano H."/>
            <person name="Kollias G."/>
            <person name="Krishnan S.P."/>
            <person name="Kruger A."/>
            <person name="Kummerfeld S.K."/>
            <person name="Kurochkin I.V."/>
            <person name="Lareau L.F."/>
            <person name="Lazarevic D."/>
            <person name="Lipovich L."/>
            <person name="Liu J."/>
            <person name="Liuni S."/>
            <person name="McWilliam S."/>
            <person name="Madan Babu M."/>
            <person name="Madera M."/>
            <person name="Marchionni L."/>
            <person name="Matsuda H."/>
            <person name="Matsuzawa S."/>
            <person name="Miki H."/>
            <person name="Mignone F."/>
            <person name="Miyake S."/>
            <person name="Morris K."/>
            <person name="Mottagui-Tabar S."/>
            <person name="Mulder N."/>
            <person name="Nakano N."/>
            <person name="Nakauchi H."/>
            <person name="Ng P."/>
            <person name="Nilsson R."/>
            <person name="Nishiguchi S."/>
            <person name="Nishikawa S."/>
            <person name="Nori F."/>
            <person name="Ohara O."/>
            <person name="Okazaki Y."/>
            <person name="Orlando V."/>
            <person name="Pang K.C."/>
            <person name="Pavan W.J."/>
            <person name="Pavesi G."/>
            <person name="Pesole G."/>
            <person name="Petrovsky N."/>
            <person name="Piazza S."/>
            <person name="Reed J."/>
            <person name="Reid J.F."/>
            <person name="Ring B.Z."/>
            <person name="Ringwald M."/>
            <person name="Rost B."/>
            <person name="Ruan Y."/>
            <person name="Salzberg S.L."/>
            <person name="Sandelin A."/>
            <person name="Schneider C."/>
            <person name="Schoenbach C."/>
            <person name="Sekiguchi K."/>
            <person name="Semple C.A."/>
            <person name="Seno S."/>
            <person name="Sessa L."/>
            <person name="Sheng Y."/>
            <person name="Shibata Y."/>
            <person name="Shimada H."/>
            <person name="Shimada K."/>
            <person name="Silva D."/>
            <person name="Sinclair B."/>
            <person name="Sperling S."/>
            <person name="Stupka E."/>
            <person name="Sugiura K."/>
            <person name="Sultana R."/>
            <person name="Takenaka Y."/>
            <person name="Taki K."/>
            <person name="Tammoja K."/>
            <person name="Tan S.L."/>
            <person name="Tang S."/>
            <person name="Taylor M.S."/>
            <person name="Tegner J."/>
            <person name="Teichmann S.A."/>
            <person name="Ueda H.R."/>
            <person name="van Nimwegen E."/>
            <person name="Verardo R."/>
            <person name="Wei C.L."/>
            <person name="Yagi K."/>
            <person name="Yamanishi H."/>
            <person name="Zabarovsky E."/>
            <person name="Zhu S."/>
            <person name="Zimmer A."/>
            <person name="Hide W."/>
            <person name="Bult C."/>
            <person name="Grimmond S.M."/>
            <person name="Teasdale R.D."/>
            <person name="Liu E.T."/>
            <person name="Brusic V."/>
            <person name="Quackenbush J."/>
            <person name="Wahlestedt C."/>
            <person name="Mattick J.S."/>
            <person name="Hume D.A."/>
            <person name="Kai C."/>
            <person name="Sasaki D."/>
            <person name="Tomaru Y."/>
            <person name="Fukuda S."/>
            <person name="Kanamori-Katayama M."/>
            <person name="Suzuki M."/>
            <person name="Aoki J."/>
            <person name="Arakawa T."/>
            <person name="Iida J."/>
            <person name="Imamura K."/>
            <person name="Itoh M."/>
            <person name="Kato T."/>
            <person name="Kawaji H."/>
            <person name="Kawagashira N."/>
            <person name="Kawashima T."/>
            <person name="Kojima M."/>
            <person name="Kondo S."/>
            <person name="Konno H."/>
            <person name="Nakano K."/>
            <person name="Ninomiya N."/>
            <person name="Nishio T."/>
            <person name="Okada M."/>
            <person name="Plessy C."/>
            <person name="Shibata K."/>
            <person name="Shiraki T."/>
            <person name="Suzuki S."/>
            <person name="Tagami M."/>
            <person name="Waki K."/>
            <person name="Watahiki A."/>
            <person name="Okamura-Oho Y."/>
            <person name="Suzuki H."/>
            <person name="Kawai J."/>
            <person name="Hayashizaki Y."/>
        </authorList>
    </citation>
    <scope>NUCLEOTIDE SEQUENCE [LARGE SCALE MRNA]</scope>
    <source>
        <strain>C57BL/6J</strain>
        <tissue>Amnion</tissue>
        <tissue>Cecum</tissue>
        <tissue>Kidney</tissue>
    </source>
</reference>
<reference key="2">
    <citation type="journal article" date="2004" name="Genome Res.">
        <title>The status, quality, and expansion of the NIH full-length cDNA project: the Mammalian Gene Collection (MGC).</title>
        <authorList>
            <consortium name="The MGC Project Team"/>
        </authorList>
    </citation>
    <scope>NUCLEOTIDE SEQUENCE [LARGE SCALE MRNA]</scope>
    <source>
        <strain>FVB/N</strain>
        <tissue>Colon</tissue>
    </source>
</reference>
<reference key="3">
    <citation type="journal article" date="2010" name="Cell">
        <title>A tissue-specific atlas of mouse protein phosphorylation and expression.</title>
        <authorList>
            <person name="Huttlin E.L."/>
            <person name="Jedrychowski M.P."/>
            <person name="Elias J.E."/>
            <person name="Goswami T."/>
            <person name="Rad R."/>
            <person name="Beausoleil S.A."/>
            <person name="Villen J."/>
            <person name="Haas W."/>
            <person name="Sowa M.E."/>
            <person name="Gygi S.P."/>
        </authorList>
    </citation>
    <scope>IDENTIFICATION BY MASS SPECTROMETRY [LARGE SCALE ANALYSIS]</scope>
    <source>
        <tissue>Kidney</tissue>
    </source>
</reference>
<gene>
    <name type="primary">Clrn3</name>
    <name type="synonym">Tmem12</name>
</gene>
<name>CLRN3_MOUSE</name>
<protein>
    <recommendedName>
        <fullName>Clarin-3</fullName>
    </recommendedName>
    <alternativeName>
        <fullName>Transmembrane protein 12</fullName>
    </alternativeName>
</protein>
<organism>
    <name type="scientific">Mus musculus</name>
    <name type="common">Mouse</name>
    <dbReference type="NCBI Taxonomy" id="10090"/>
    <lineage>
        <taxon>Eukaryota</taxon>
        <taxon>Metazoa</taxon>
        <taxon>Chordata</taxon>
        <taxon>Craniata</taxon>
        <taxon>Vertebrata</taxon>
        <taxon>Euteleostomi</taxon>
        <taxon>Mammalia</taxon>
        <taxon>Eutheria</taxon>
        <taxon>Euarchontoglires</taxon>
        <taxon>Glires</taxon>
        <taxon>Rodentia</taxon>
        <taxon>Myomorpha</taxon>
        <taxon>Muroidea</taxon>
        <taxon>Muridae</taxon>
        <taxon>Murinae</taxon>
        <taxon>Mus</taxon>
        <taxon>Mus</taxon>
    </lineage>
</organism>
<dbReference type="EMBL" id="AK033715">
    <property type="protein sequence ID" value="BAC28442.1"/>
    <property type="molecule type" value="mRNA"/>
</dbReference>
<dbReference type="EMBL" id="AK085267">
    <property type="protein sequence ID" value="BAC39405.1"/>
    <property type="molecule type" value="mRNA"/>
</dbReference>
<dbReference type="EMBL" id="AK146608">
    <property type="protein sequence ID" value="BAE27300.1"/>
    <property type="molecule type" value="mRNA"/>
</dbReference>
<dbReference type="EMBL" id="BC036176">
    <property type="protein sequence ID" value="AAH36176.1"/>
    <property type="molecule type" value="mRNA"/>
</dbReference>
<dbReference type="CCDS" id="CCDS21943.1"/>
<dbReference type="RefSeq" id="NP_848784.1">
    <property type="nucleotide sequence ID" value="NM_178669.5"/>
</dbReference>
<dbReference type="FunCoup" id="Q8BHH8">
    <property type="interactions" value="2"/>
</dbReference>
<dbReference type="STRING" id="10090.ENSMUSP00000056245"/>
<dbReference type="GlyCosmos" id="Q8BHH8">
    <property type="glycosylation" value="1 site, No reported glycans"/>
</dbReference>
<dbReference type="GlyGen" id="Q8BHH8">
    <property type="glycosylation" value="1 site"/>
</dbReference>
<dbReference type="iPTMnet" id="Q8BHH8"/>
<dbReference type="PhosphoSitePlus" id="Q8BHH8"/>
<dbReference type="jPOST" id="Q8BHH8"/>
<dbReference type="PaxDb" id="10090-ENSMUSP00000056245"/>
<dbReference type="ProteomicsDB" id="283862"/>
<dbReference type="Antibodypedia" id="19247">
    <property type="antibodies" value="111 antibodies from 20 providers"/>
</dbReference>
<dbReference type="DNASU" id="212070"/>
<dbReference type="Ensembl" id="ENSMUST00000053716.8">
    <property type="protein sequence ID" value="ENSMUSP00000056245.8"/>
    <property type="gene ID" value="ENSMUSG00000050866.8"/>
</dbReference>
<dbReference type="GeneID" id="212070"/>
<dbReference type="KEGG" id="mmu:212070"/>
<dbReference type="UCSC" id="uc009ked.1">
    <property type="organism name" value="mouse"/>
</dbReference>
<dbReference type="AGR" id="MGI:2142022"/>
<dbReference type="CTD" id="119467"/>
<dbReference type="MGI" id="MGI:2142022">
    <property type="gene designation" value="Clrn3"/>
</dbReference>
<dbReference type="VEuPathDB" id="HostDB:ENSMUSG00000050866"/>
<dbReference type="eggNOG" id="ENOG502S2S8">
    <property type="taxonomic scope" value="Eukaryota"/>
</dbReference>
<dbReference type="GeneTree" id="ENSGT00850000132319"/>
<dbReference type="HOGENOM" id="CLU_1224445_0_0_1"/>
<dbReference type="InParanoid" id="Q8BHH8"/>
<dbReference type="OMA" id="IIIVFYQ"/>
<dbReference type="OrthoDB" id="9450082at2759"/>
<dbReference type="PhylomeDB" id="Q8BHH8"/>
<dbReference type="TreeFam" id="TF331875"/>
<dbReference type="BioGRID-ORCS" id="212070">
    <property type="hits" value="0 hits in 77 CRISPR screens"/>
</dbReference>
<dbReference type="ChiTaRS" id="Clrn3">
    <property type="organism name" value="mouse"/>
</dbReference>
<dbReference type="PRO" id="PR:Q8BHH8"/>
<dbReference type="Proteomes" id="UP000000589">
    <property type="component" value="Chromosome 7"/>
</dbReference>
<dbReference type="RNAct" id="Q8BHH8">
    <property type="molecule type" value="protein"/>
</dbReference>
<dbReference type="Bgee" id="ENSMUSG00000050866">
    <property type="expression patterns" value="Expressed in small intestine Peyer's patch and 61 other cell types or tissues"/>
</dbReference>
<dbReference type="GO" id="GO:0016020">
    <property type="term" value="C:membrane"/>
    <property type="evidence" value="ECO:0007669"/>
    <property type="project" value="UniProtKB-SubCell"/>
</dbReference>
<dbReference type="GO" id="GO:0007605">
    <property type="term" value="P:sensory perception of sound"/>
    <property type="evidence" value="ECO:0007669"/>
    <property type="project" value="UniProtKB-ARBA"/>
</dbReference>
<dbReference type="Gene3D" id="1.20.140.150">
    <property type="match status" value="1"/>
</dbReference>
<dbReference type="InterPro" id="IPR026748">
    <property type="entry name" value="Clarin"/>
</dbReference>
<dbReference type="PANTHER" id="PTHR31548">
    <property type="entry name" value="CLARIN"/>
    <property type="match status" value="1"/>
</dbReference>
<dbReference type="PANTHER" id="PTHR31548:SF3">
    <property type="entry name" value="CLARIN-3"/>
    <property type="match status" value="1"/>
</dbReference>
<accession>Q8BHH8</accession>
<keyword id="KW-0325">Glycoprotein</keyword>
<keyword id="KW-0472">Membrane</keyword>
<keyword id="KW-1185">Reference proteome</keyword>
<keyword id="KW-0812">Transmembrane</keyword>
<keyword id="KW-1133">Transmembrane helix</keyword>
<sequence length="226" mass="25350">MPTTQKTLMFLSGFLTSLGSVVVICSILATQAWITSRIFFTDAISNGTIVITYGLFRGTSAQELNEGLQDLDKNFEVLGILDNSSQKSLHLVVILLLILSLAASVLSSVFTFYNSISNPYQTFLGPMGVYTWNGLSASFVFLAMVLFVGNAESNHLSDKLSQKLYPDTTNKRTTHTYGYSFWLTLHVIFLNIVTAVIIIFYQKARYRQKQEQRKPVEYAPRDGILF</sequence>